<keyword id="KW-0028">Amino-acid biosynthesis</keyword>
<keyword id="KW-0055">Arginine biosynthesis</keyword>
<keyword id="KW-0963">Cytoplasm</keyword>
<keyword id="KW-0456">Lyase</keyword>
<proteinExistence type="inferred from homology"/>
<protein>
    <recommendedName>
        <fullName evidence="1">Argininosuccinate lyase</fullName>
        <shortName evidence="1">ASAL</shortName>
        <ecNumber evidence="1">4.3.2.1</ecNumber>
    </recommendedName>
    <alternativeName>
        <fullName evidence="1">Arginosuccinase</fullName>
    </alternativeName>
</protein>
<accession>B4S0H4</accession>
<accession>F2G798</accession>
<feature type="chain" id="PRO_1000089064" description="Argininosuccinate lyase">
    <location>
        <begin position="1"/>
        <end position="460"/>
    </location>
</feature>
<gene>
    <name evidence="1" type="primary">argH</name>
    <name type="ordered locus">MADE_1002645</name>
</gene>
<comment type="catalytic activity">
    <reaction evidence="1">
        <text>2-(N(omega)-L-arginino)succinate = fumarate + L-arginine</text>
        <dbReference type="Rhea" id="RHEA:24020"/>
        <dbReference type="ChEBI" id="CHEBI:29806"/>
        <dbReference type="ChEBI" id="CHEBI:32682"/>
        <dbReference type="ChEBI" id="CHEBI:57472"/>
        <dbReference type="EC" id="4.3.2.1"/>
    </reaction>
</comment>
<comment type="pathway">
    <text evidence="1">Amino-acid biosynthesis; L-arginine biosynthesis; L-arginine from L-ornithine and carbamoyl phosphate: step 3/3.</text>
</comment>
<comment type="subcellular location">
    <subcellularLocation>
        <location evidence="1">Cytoplasm</location>
    </subcellularLocation>
</comment>
<comment type="similarity">
    <text evidence="1">Belongs to the lyase 1 family. Argininosuccinate lyase subfamily.</text>
</comment>
<sequence>MALWGGRFESGASSMFKQVNDSLPFDQVMASQDIQGSISWSRALQKAGVLTADEQAQLEGALSELKAQADAGELDFNASSEEDIHSFVEAALIEKLGDIGRKLHTGRSRNDQVATDFRLWVREHIASLRADVLGVIKSLLNAASRHQEAIIPGYTHLQRAQPIHFAHWCLAYVEMLKRDLSRLDDLKVRMNQCPLGSGALAGTTFPVDRHAIAEELGFDSPCLNSLDAVSDRDFVLELLFVASTSMMHLSRLAEDMIFYNSGEAGFLQLGDSVTSGSSLMPQKKNPDALELMRGKCGRVFGALQALLVTMKGLPLAYNKDMQEDKEGAIDTVNQWHICLCIASEVLDSLQLNEERCRVAAAQGFSNATELADYLVGKGVPFRTGHDIAGRVVLQAIDKGCAIEDLPLSDLQAISDKIEDDVYPVLQLEYGVNQRNILGGTSKETVTKALYQELENLDKQG</sequence>
<reference key="1">
    <citation type="journal article" date="2008" name="ISME J.">
        <title>Comparative genomics of two ecotypes of the marine planktonic copiotroph Alteromonas macleodii suggests alternative lifestyles associated with different kinds of particulate organic matter.</title>
        <authorList>
            <person name="Ivars-Martinez E."/>
            <person name="Martin-Cuadrado A.-B."/>
            <person name="D'Auria G."/>
            <person name="Mira A."/>
            <person name="Ferriera S."/>
            <person name="Johnson J."/>
            <person name="Friedman R."/>
            <person name="Rodriguez-Valera F."/>
        </authorList>
    </citation>
    <scope>NUCLEOTIDE SEQUENCE [LARGE SCALE GENOMIC DNA]</scope>
    <source>
        <strain>DSM 17117 / CIP 110805 / LMG 28347 / Deep ecotype</strain>
    </source>
</reference>
<dbReference type="EC" id="4.3.2.1" evidence="1"/>
<dbReference type="EMBL" id="CP001103">
    <property type="protein sequence ID" value="AEA96678.1"/>
    <property type="molecule type" value="Genomic_DNA"/>
</dbReference>
<dbReference type="RefSeq" id="WP_012517033.1">
    <property type="nucleotide sequence ID" value="NC_011138.3"/>
</dbReference>
<dbReference type="SMR" id="B4S0H4"/>
<dbReference type="GeneID" id="56341018"/>
<dbReference type="KEGG" id="amc:MADE_1002645"/>
<dbReference type="HOGENOM" id="CLU_027272_2_3_6"/>
<dbReference type="UniPathway" id="UPA00068">
    <property type="reaction ID" value="UER00114"/>
</dbReference>
<dbReference type="Proteomes" id="UP000001870">
    <property type="component" value="Chromosome"/>
</dbReference>
<dbReference type="GO" id="GO:0005829">
    <property type="term" value="C:cytosol"/>
    <property type="evidence" value="ECO:0007669"/>
    <property type="project" value="TreeGrafter"/>
</dbReference>
<dbReference type="GO" id="GO:0004056">
    <property type="term" value="F:argininosuccinate lyase activity"/>
    <property type="evidence" value="ECO:0007669"/>
    <property type="project" value="UniProtKB-UniRule"/>
</dbReference>
<dbReference type="GO" id="GO:0042450">
    <property type="term" value="P:arginine biosynthetic process via ornithine"/>
    <property type="evidence" value="ECO:0007669"/>
    <property type="project" value="InterPro"/>
</dbReference>
<dbReference type="GO" id="GO:0006526">
    <property type="term" value="P:L-arginine biosynthetic process"/>
    <property type="evidence" value="ECO:0007669"/>
    <property type="project" value="UniProtKB-UniRule"/>
</dbReference>
<dbReference type="CDD" id="cd01359">
    <property type="entry name" value="Argininosuccinate_lyase"/>
    <property type="match status" value="1"/>
</dbReference>
<dbReference type="FunFam" id="1.10.40.30:FF:000001">
    <property type="entry name" value="Argininosuccinate lyase"/>
    <property type="match status" value="1"/>
</dbReference>
<dbReference type="FunFam" id="1.20.200.10:FF:000006">
    <property type="entry name" value="Argininosuccinate lyase"/>
    <property type="match status" value="1"/>
</dbReference>
<dbReference type="Gene3D" id="1.10.40.30">
    <property type="entry name" value="Fumarase/aspartase (C-terminal domain)"/>
    <property type="match status" value="1"/>
</dbReference>
<dbReference type="Gene3D" id="1.20.200.10">
    <property type="entry name" value="Fumarase/aspartase (Central domain)"/>
    <property type="match status" value="1"/>
</dbReference>
<dbReference type="Gene3D" id="1.10.275.10">
    <property type="entry name" value="Fumarase/aspartase (N-terminal domain)"/>
    <property type="match status" value="1"/>
</dbReference>
<dbReference type="HAMAP" id="MF_00006">
    <property type="entry name" value="Arg_succ_lyase"/>
    <property type="match status" value="1"/>
</dbReference>
<dbReference type="InterPro" id="IPR029419">
    <property type="entry name" value="Arg_succ_lyase_C"/>
</dbReference>
<dbReference type="InterPro" id="IPR009049">
    <property type="entry name" value="Argininosuccinate_lyase"/>
</dbReference>
<dbReference type="InterPro" id="IPR024083">
    <property type="entry name" value="Fumarase/histidase_N"/>
</dbReference>
<dbReference type="InterPro" id="IPR020557">
    <property type="entry name" value="Fumarate_lyase_CS"/>
</dbReference>
<dbReference type="InterPro" id="IPR000362">
    <property type="entry name" value="Fumarate_lyase_fam"/>
</dbReference>
<dbReference type="InterPro" id="IPR022761">
    <property type="entry name" value="Fumarate_lyase_N"/>
</dbReference>
<dbReference type="InterPro" id="IPR008948">
    <property type="entry name" value="L-Aspartase-like"/>
</dbReference>
<dbReference type="NCBIfam" id="TIGR00838">
    <property type="entry name" value="argH"/>
    <property type="match status" value="1"/>
</dbReference>
<dbReference type="NCBIfam" id="NF008964">
    <property type="entry name" value="PRK12308.1"/>
    <property type="match status" value="1"/>
</dbReference>
<dbReference type="PANTHER" id="PTHR43814">
    <property type="entry name" value="ARGININOSUCCINATE LYASE"/>
    <property type="match status" value="1"/>
</dbReference>
<dbReference type="PANTHER" id="PTHR43814:SF1">
    <property type="entry name" value="ARGININOSUCCINATE LYASE"/>
    <property type="match status" value="1"/>
</dbReference>
<dbReference type="Pfam" id="PF14698">
    <property type="entry name" value="ASL_C2"/>
    <property type="match status" value="1"/>
</dbReference>
<dbReference type="Pfam" id="PF00206">
    <property type="entry name" value="Lyase_1"/>
    <property type="match status" value="1"/>
</dbReference>
<dbReference type="PRINTS" id="PR00145">
    <property type="entry name" value="ARGSUCLYASE"/>
</dbReference>
<dbReference type="PRINTS" id="PR00149">
    <property type="entry name" value="FUMRATELYASE"/>
</dbReference>
<dbReference type="SUPFAM" id="SSF48557">
    <property type="entry name" value="L-aspartase-like"/>
    <property type="match status" value="1"/>
</dbReference>
<dbReference type="PROSITE" id="PS00163">
    <property type="entry name" value="FUMARATE_LYASES"/>
    <property type="match status" value="1"/>
</dbReference>
<organism>
    <name type="scientific">Alteromonas mediterranea (strain DSM 17117 / CIP 110805 / LMG 28347 / Deep ecotype)</name>
    <dbReference type="NCBI Taxonomy" id="1774373"/>
    <lineage>
        <taxon>Bacteria</taxon>
        <taxon>Pseudomonadati</taxon>
        <taxon>Pseudomonadota</taxon>
        <taxon>Gammaproteobacteria</taxon>
        <taxon>Alteromonadales</taxon>
        <taxon>Alteromonadaceae</taxon>
        <taxon>Alteromonas/Salinimonas group</taxon>
        <taxon>Alteromonas</taxon>
    </lineage>
</organism>
<evidence type="ECO:0000255" key="1">
    <source>
        <dbReference type="HAMAP-Rule" id="MF_00006"/>
    </source>
</evidence>
<name>ARLY_ALTMD</name>